<protein>
    <recommendedName>
        <fullName evidence="1">Thiol peroxidase</fullName>
        <shortName evidence="1">Tpx</shortName>
        <ecNumber evidence="1">1.11.1.24</ecNumber>
    </recommendedName>
    <alternativeName>
        <fullName evidence="1">Peroxiredoxin tpx</fullName>
        <shortName evidence="1">Prx</shortName>
    </alternativeName>
    <alternativeName>
        <fullName evidence="1">Thioredoxin peroxidase</fullName>
    </alternativeName>
    <alternativeName>
        <fullName evidence="1">Thioredoxin-dependent peroxiredoxin</fullName>
    </alternativeName>
</protein>
<sequence length="168" mass="17714">MIMATITLKGNSIHTAGELPAVGSQLPAFTLVKSDLSEVSPADFAGKKLVLNIFPSLDTAVCAASVRRFNKEAGERGDAVVLCISADLPFAQGRFCTTEGLDNVVPLSVYRSPEFGLDYGLTITDGPLKGLLSRAVIVTDASGKVLYAEQVPEIVQEPDYDKALAALA</sequence>
<feature type="chain" id="PRO_0000187872" description="Thiol peroxidase">
    <location>
        <begin position="1"/>
        <end position="168"/>
    </location>
</feature>
<feature type="domain" description="Thioredoxin" evidence="1">
    <location>
        <begin position="20"/>
        <end position="168"/>
    </location>
</feature>
<feature type="active site" description="Cysteine sulfenic acid (-SOH) intermediate" evidence="1">
    <location>
        <position position="62"/>
    </location>
</feature>
<feature type="disulfide bond" description="Redox-active" evidence="1">
    <location>
        <begin position="62"/>
        <end position="96"/>
    </location>
</feature>
<name>TPX_CHLTE</name>
<gene>
    <name evidence="1" type="primary">tpx</name>
    <name type="ordered locus">CT0754</name>
</gene>
<reference key="1">
    <citation type="journal article" date="2002" name="Proc. Natl. Acad. Sci. U.S.A.">
        <title>The complete genome sequence of Chlorobium tepidum TLS, a photosynthetic, anaerobic, green-sulfur bacterium.</title>
        <authorList>
            <person name="Eisen J.A."/>
            <person name="Nelson K.E."/>
            <person name="Paulsen I.T."/>
            <person name="Heidelberg J.F."/>
            <person name="Wu M."/>
            <person name="Dodson R.J."/>
            <person name="DeBoy R.T."/>
            <person name="Gwinn M.L."/>
            <person name="Nelson W.C."/>
            <person name="Haft D.H."/>
            <person name="Hickey E.K."/>
            <person name="Peterson J.D."/>
            <person name="Durkin A.S."/>
            <person name="Kolonay J.F."/>
            <person name="Yang F."/>
            <person name="Holt I.E."/>
            <person name="Umayam L.A."/>
            <person name="Mason T.M."/>
            <person name="Brenner M."/>
            <person name="Shea T.P."/>
            <person name="Parksey D.S."/>
            <person name="Nierman W.C."/>
            <person name="Feldblyum T.V."/>
            <person name="Hansen C.L."/>
            <person name="Craven M.B."/>
            <person name="Radune D."/>
            <person name="Vamathevan J.J."/>
            <person name="Khouri H.M."/>
            <person name="White O."/>
            <person name="Gruber T.M."/>
            <person name="Ketchum K.A."/>
            <person name="Venter J.C."/>
            <person name="Tettelin H."/>
            <person name="Bryant D.A."/>
            <person name="Fraser C.M."/>
        </authorList>
    </citation>
    <scope>NUCLEOTIDE SEQUENCE [LARGE SCALE GENOMIC DNA]</scope>
    <source>
        <strain>ATCC 49652 / DSM 12025 / NBRC 103806 / TLS</strain>
    </source>
</reference>
<comment type="function">
    <text evidence="1">Thiol-specific peroxidase that catalyzes the reduction of hydrogen peroxide and organic hydroperoxides to water and alcohols, respectively. Plays a role in cell protection against oxidative stress by detoxifying peroxides.</text>
</comment>
<comment type="catalytic activity">
    <reaction evidence="1">
        <text>a hydroperoxide + [thioredoxin]-dithiol = an alcohol + [thioredoxin]-disulfide + H2O</text>
        <dbReference type="Rhea" id="RHEA:62620"/>
        <dbReference type="Rhea" id="RHEA-COMP:10698"/>
        <dbReference type="Rhea" id="RHEA-COMP:10700"/>
        <dbReference type="ChEBI" id="CHEBI:15377"/>
        <dbReference type="ChEBI" id="CHEBI:29950"/>
        <dbReference type="ChEBI" id="CHEBI:30879"/>
        <dbReference type="ChEBI" id="CHEBI:35924"/>
        <dbReference type="ChEBI" id="CHEBI:50058"/>
        <dbReference type="EC" id="1.11.1.24"/>
    </reaction>
</comment>
<comment type="subunit">
    <text evidence="1">Homodimer.</text>
</comment>
<comment type="miscellaneous">
    <text evidence="1">The active site is a conserved redox-active cysteine residue, the peroxidatic cysteine (C(P)), which makes the nucleophilic attack on the peroxide substrate. The peroxide oxidizes the C(P)-SH to cysteine sulfenic acid (C(P)-SOH), which then reacts with another cysteine residue, the resolving cysteine (C(R)), to form a disulfide bridge. The disulfide is subsequently reduced by an appropriate electron donor to complete the catalytic cycle. In this atypical 2-Cys peroxiredoxin, C(R) is present in the same subunit to form an intramolecular disulfide. The disulfide is subsequently reduced by thioredoxin.</text>
</comment>
<comment type="similarity">
    <text evidence="1">Belongs to the peroxiredoxin family. Tpx subfamily.</text>
</comment>
<dbReference type="EC" id="1.11.1.24" evidence="1"/>
<dbReference type="EMBL" id="AE006470">
    <property type="protein sequence ID" value="AAM71991.1"/>
    <property type="molecule type" value="Genomic_DNA"/>
</dbReference>
<dbReference type="RefSeq" id="NP_661649.1">
    <property type="nucleotide sequence ID" value="NC_002932.3"/>
</dbReference>
<dbReference type="SMR" id="Q8KED5"/>
<dbReference type="STRING" id="194439.CT0754"/>
<dbReference type="EnsemblBacteria" id="AAM71991">
    <property type="protein sequence ID" value="AAM71991"/>
    <property type="gene ID" value="CT0754"/>
</dbReference>
<dbReference type="KEGG" id="cte:CT0754"/>
<dbReference type="PATRIC" id="fig|194439.7.peg.686"/>
<dbReference type="eggNOG" id="COG2077">
    <property type="taxonomic scope" value="Bacteria"/>
</dbReference>
<dbReference type="HOGENOM" id="CLU_042529_12_2_10"/>
<dbReference type="OrthoDB" id="9781543at2"/>
<dbReference type="Proteomes" id="UP000001007">
    <property type="component" value="Chromosome"/>
</dbReference>
<dbReference type="GO" id="GO:0008379">
    <property type="term" value="F:thioredoxin peroxidase activity"/>
    <property type="evidence" value="ECO:0007669"/>
    <property type="project" value="UniProtKB-UniRule"/>
</dbReference>
<dbReference type="CDD" id="cd03014">
    <property type="entry name" value="PRX_Atyp2cys"/>
    <property type="match status" value="1"/>
</dbReference>
<dbReference type="Gene3D" id="3.40.30.10">
    <property type="entry name" value="Glutaredoxin"/>
    <property type="match status" value="1"/>
</dbReference>
<dbReference type="HAMAP" id="MF_00269">
    <property type="entry name" value="Tpx"/>
    <property type="match status" value="1"/>
</dbReference>
<dbReference type="InterPro" id="IPR013740">
    <property type="entry name" value="Redoxin"/>
</dbReference>
<dbReference type="InterPro" id="IPR036249">
    <property type="entry name" value="Thioredoxin-like_sf"/>
</dbReference>
<dbReference type="InterPro" id="IPR013766">
    <property type="entry name" value="Thioredoxin_domain"/>
</dbReference>
<dbReference type="InterPro" id="IPR002065">
    <property type="entry name" value="TPX"/>
</dbReference>
<dbReference type="InterPro" id="IPR018219">
    <property type="entry name" value="Tpx_CS"/>
</dbReference>
<dbReference type="InterPro" id="IPR050455">
    <property type="entry name" value="Tpx_Peroxidase_subfamily"/>
</dbReference>
<dbReference type="NCBIfam" id="NF001808">
    <property type="entry name" value="PRK00522.1"/>
    <property type="match status" value="1"/>
</dbReference>
<dbReference type="PANTHER" id="PTHR43110">
    <property type="entry name" value="THIOL PEROXIDASE"/>
    <property type="match status" value="1"/>
</dbReference>
<dbReference type="PANTHER" id="PTHR43110:SF1">
    <property type="entry name" value="THIOL PEROXIDASE"/>
    <property type="match status" value="1"/>
</dbReference>
<dbReference type="Pfam" id="PF08534">
    <property type="entry name" value="Redoxin"/>
    <property type="match status" value="1"/>
</dbReference>
<dbReference type="SUPFAM" id="SSF52833">
    <property type="entry name" value="Thioredoxin-like"/>
    <property type="match status" value="1"/>
</dbReference>
<dbReference type="PROSITE" id="PS51352">
    <property type="entry name" value="THIOREDOXIN_2"/>
    <property type="match status" value="1"/>
</dbReference>
<dbReference type="PROSITE" id="PS01265">
    <property type="entry name" value="TPX"/>
    <property type="match status" value="1"/>
</dbReference>
<organism>
    <name type="scientific">Chlorobaculum tepidum (strain ATCC 49652 / DSM 12025 / NBRC 103806 / TLS)</name>
    <name type="common">Chlorobium tepidum</name>
    <dbReference type="NCBI Taxonomy" id="194439"/>
    <lineage>
        <taxon>Bacteria</taxon>
        <taxon>Pseudomonadati</taxon>
        <taxon>Chlorobiota</taxon>
        <taxon>Chlorobiia</taxon>
        <taxon>Chlorobiales</taxon>
        <taxon>Chlorobiaceae</taxon>
        <taxon>Chlorobaculum</taxon>
    </lineage>
</organism>
<accession>Q8KED5</accession>
<evidence type="ECO:0000255" key="1">
    <source>
        <dbReference type="HAMAP-Rule" id="MF_00269"/>
    </source>
</evidence>
<keyword id="KW-0049">Antioxidant</keyword>
<keyword id="KW-1015">Disulfide bond</keyword>
<keyword id="KW-0560">Oxidoreductase</keyword>
<keyword id="KW-0575">Peroxidase</keyword>
<keyword id="KW-0676">Redox-active center</keyword>
<keyword id="KW-1185">Reference proteome</keyword>
<proteinExistence type="inferred from homology"/>